<reference key="1">
    <citation type="journal article" date="1999" name="Science">
        <title>Genome sequence of the radioresistant bacterium Deinococcus radiodurans R1.</title>
        <authorList>
            <person name="White O."/>
            <person name="Eisen J.A."/>
            <person name="Heidelberg J.F."/>
            <person name="Hickey E.K."/>
            <person name="Peterson J.D."/>
            <person name="Dodson R.J."/>
            <person name="Haft D.H."/>
            <person name="Gwinn M.L."/>
            <person name="Nelson W.C."/>
            <person name="Richardson D.L."/>
            <person name="Moffat K.S."/>
            <person name="Qin H."/>
            <person name="Jiang L."/>
            <person name="Pamphile W."/>
            <person name="Crosby M."/>
            <person name="Shen M."/>
            <person name="Vamathevan J.J."/>
            <person name="Lam P."/>
            <person name="McDonald L.A."/>
            <person name="Utterback T.R."/>
            <person name="Zalewski C."/>
            <person name="Makarova K.S."/>
            <person name="Aravind L."/>
            <person name="Daly M.J."/>
            <person name="Minton K.W."/>
            <person name="Fleischmann R.D."/>
            <person name="Ketchum K.A."/>
            <person name="Nelson K.E."/>
            <person name="Salzberg S.L."/>
            <person name="Smith H.O."/>
            <person name="Venter J.C."/>
            <person name="Fraser C.M."/>
        </authorList>
    </citation>
    <scope>NUCLEOTIDE SEQUENCE [LARGE SCALE GENOMIC DNA]</scope>
    <source>
        <strain>ATCC 13939 / DSM 20539 / JCM 16871 / CCUG 27074 / LMG 4051 / NBRC 15346 / NCIMB 9279 / VKM B-1422 / R1</strain>
    </source>
</reference>
<gene>
    <name evidence="1" type="primary">rpsH</name>
    <name type="ordered locus">DR_2110</name>
</gene>
<protein>
    <recommendedName>
        <fullName evidence="1">Small ribosomal subunit protein uS8</fullName>
    </recommendedName>
    <alternativeName>
        <fullName evidence="2">30S ribosomal protein S8</fullName>
    </alternativeName>
</protein>
<comment type="function">
    <text evidence="1">One of the primary rRNA binding proteins, it binds directly to 16S rRNA central domain where it helps coordinate assembly of the platform of the 30S subunit.</text>
</comment>
<comment type="subunit">
    <text evidence="1">Part of the 30S ribosomal subunit. Contacts proteins S5 and S12.</text>
</comment>
<comment type="similarity">
    <text evidence="1">Belongs to the universal ribosomal protein uS8 family.</text>
</comment>
<organism>
    <name type="scientific">Deinococcus radiodurans (strain ATCC 13939 / DSM 20539 / JCM 16871 / CCUG 27074 / LMG 4051 / NBRC 15346 / NCIMB 9279 / VKM B-1422 / R1)</name>
    <dbReference type="NCBI Taxonomy" id="243230"/>
    <lineage>
        <taxon>Bacteria</taxon>
        <taxon>Thermotogati</taxon>
        <taxon>Deinococcota</taxon>
        <taxon>Deinococci</taxon>
        <taxon>Deinococcales</taxon>
        <taxon>Deinococcaceae</taxon>
        <taxon>Deinococcus</taxon>
    </lineage>
</organism>
<evidence type="ECO:0000255" key="1">
    <source>
        <dbReference type="HAMAP-Rule" id="MF_01302"/>
    </source>
</evidence>
<evidence type="ECO:0000305" key="2"/>
<keyword id="KW-1185">Reference proteome</keyword>
<keyword id="KW-0687">Ribonucleoprotein</keyword>
<keyword id="KW-0689">Ribosomal protein</keyword>
<keyword id="KW-0694">RNA-binding</keyword>
<keyword id="KW-0699">rRNA-binding</keyword>
<accession>Q9RSL4</accession>
<dbReference type="EMBL" id="AE000513">
    <property type="protein sequence ID" value="AAF11659.1"/>
    <property type="molecule type" value="Genomic_DNA"/>
</dbReference>
<dbReference type="PIR" id="A75314">
    <property type="entry name" value="A75314"/>
</dbReference>
<dbReference type="RefSeq" id="NP_295833.1">
    <property type="nucleotide sequence ID" value="NC_001263.1"/>
</dbReference>
<dbReference type="RefSeq" id="WP_010888741.1">
    <property type="nucleotide sequence ID" value="NC_001263.1"/>
</dbReference>
<dbReference type="SMR" id="Q9RSL4"/>
<dbReference type="FunCoup" id="Q9RSL4">
    <property type="interactions" value="398"/>
</dbReference>
<dbReference type="STRING" id="243230.DR_2110"/>
<dbReference type="PaxDb" id="243230-DR_2110"/>
<dbReference type="EnsemblBacteria" id="AAF11659">
    <property type="protein sequence ID" value="AAF11659"/>
    <property type="gene ID" value="DR_2110"/>
</dbReference>
<dbReference type="GeneID" id="69518352"/>
<dbReference type="KEGG" id="dra:DR_2110"/>
<dbReference type="PATRIC" id="fig|243230.17.peg.2333"/>
<dbReference type="eggNOG" id="COG0096">
    <property type="taxonomic scope" value="Bacteria"/>
</dbReference>
<dbReference type="HOGENOM" id="CLU_098428_0_2_0"/>
<dbReference type="InParanoid" id="Q9RSL4"/>
<dbReference type="OrthoDB" id="9802617at2"/>
<dbReference type="Proteomes" id="UP000002524">
    <property type="component" value="Chromosome 1"/>
</dbReference>
<dbReference type="GO" id="GO:0022627">
    <property type="term" value="C:cytosolic small ribosomal subunit"/>
    <property type="evidence" value="ECO:0000318"/>
    <property type="project" value="GO_Central"/>
</dbReference>
<dbReference type="GO" id="GO:0019843">
    <property type="term" value="F:rRNA binding"/>
    <property type="evidence" value="ECO:0007669"/>
    <property type="project" value="UniProtKB-UniRule"/>
</dbReference>
<dbReference type="GO" id="GO:0003735">
    <property type="term" value="F:structural constituent of ribosome"/>
    <property type="evidence" value="ECO:0000318"/>
    <property type="project" value="GO_Central"/>
</dbReference>
<dbReference type="GO" id="GO:0006412">
    <property type="term" value="P:translation"/>
    <property type="evidence" value="ECO:0007669"/>
    <property type="project" value="UniProtKB-UniRule"/>
</dbReference>
<dbReference type="FunFam" id="3.30.1370.30:FF:000002">
    <property type="entry name" value="30S ribosomal protein S8"/>
    <property type="match status" value="1"/>
</dbReference>
<dbReference type="FunFam" id="3.30.1490.10:FF:000001">
    <property type="entry name" value="30S ribosomal protein S8"/>
    <property type="match status" value="1"/>
</dbReference>
<dbReference type="Gene3D" id="3.30.1370.30">
    <property type="match status" value="1"/>
</dbReference>
<dbReference type="Gene3D" id="3.30.1490.10">
    <property type="match status" value="1"/>
</dbReference>
<dbReference type="HAMAP" id="MF_01302_B">
    <property type="entry name" value="Ribosomal_uS8_B"/>
    <property type="match status" value="1"/>
</dbReference>
<dbReference type="InterPro" id="IPR000630">
    <property type="entry name" value="Ribosomal_uS8"/>
</dbReference>
<dbReference type="InterPro" id="IPR047863">
    <property type="entry name" value="Ribosomal_uS8_CS"/>
</dbReference>
<dbReference type="InterPro" id="IPR035987">
    <property type="entry name" value="Ribosomal_uS8_sf"/>
</dbReference>
<dbReference type="NCBIfam" id="NF001109">
    <property type="entry name" value="PRK00136.1"/>
    <property type="match status" value="1"/>
</dbReference>
<dbReference type="PANTHER" id="PTHR11758">
    <property type="entry name" value="40S RIBOSOMAL PROTEIN S15A"/>
    <property type="match status" value="1"/>
</dbReference>
<dbReference type="Pfam" id="PF00410">
    <property type="entry name" value="Ribosomal_S8"/>
    <property type="match status" value="1"/>
</dbReference>
<dbReference type="SUPFAM" id="SSF56047">
    <property type="entry name" value="Ribosomal protein S8"/>
    <property type="match status" value="1"/>
</dbReference>
<dbReference type="PROSITE" id="PS00053">
    <property type="entry name" value="RIBOSOMAL_S8"/>
    <property type="match status" value="1"/>
</dbReference>
<proteinExistence type="inferred from homology"/>
<name>RS8_DEIRA</name>
<feature type="chain" id="PRO_0000126403" description="Small ribosomal subunit protein uS8">
    <location>
        <begin position="1"/>
        <end position="133"/>
    </location>
</feature>
<sequence length="133" mass="15048">MLSDPIADMLTRIRNATRTHKETVDIPASKFKEELAKLLVREGYVQGVERTRPEGQKFDVLRVTLKYGEKREQVIKHIERVSRPGRRAYVSAENLPRVQRGLGVAVVSTSRGLLPDREARQQGVGGEVVCVLW</sequence>